<name>VE4_HPV63</name>
<comment type="function">
    <text evidence="1">Contributes to multiple aspects of the viral life cycle including viral genome amplification, suppression of suprabasal cell differentiation and egress of newly formed virions. Induces host cell cycle arrest at the G2 phase by associating with and preventing the nuclear entry of host CDK1/cyclin B1 complexes. Inhibits cellular DNA replication by preventing loading of host replication licensing proteins MCM2 and MCM7 onto chromatin. Within the cytoplasm, associates with host kinase SRPK1, a splicing factor regulator, and inhibits its activity. Therefore, E4 favors expression of late viral transcripts by inhibiting SRPK1-mediated phosphorylation of host serine-arginine (SR) proteins that have critical roles in mRNA metabolism. Late in the infectious cycle, E4 also acts to diminish the integrity of the keratinocyte by disrupting the keratin cytoskeleton and inducing apoptosis through alteration of mitochondrial function to facilitate egress of the newly formed virions.</text>
</comment>
<comment type="subunit">
    <text evidence="1">Assembles into oligomeric complexes. Interacts with host CDK1. Interacts with host SRPK1; this interaction may favor expression of late viral transcripts. Interacts with host cytokeratin components KRT8 and KRT18.</text>
</comment>
<comment type="subcellular location">
    <subcellularLocation>
        <location evidence="1">Host cytoplasm</location>
    </subcellularLocation>
    <subcellularLocation>
        <location evidence="1">Host nucleus</location>
    </subcellularLocation>
</comment>
<comment type="PTM">
    <text evidence="1">Phosphorylated by host ERK. The phosphorylation triggers a structural change that enhances keratin binding and protein stability.</text>
</comment>
<comment type="miscellaneous">
    <text evidence="1">The major E4 form is first synthesized as an E1^E4 fusion protein from spliced E1^E4 transcripts, such that the first few amino acids of the E4 protein are derived from the N terminus of E1.</text>
</comment>
<comment type="similarity">
    <text evidence="3">Belongs to the papillomaviridae E4 protein family.</text>
</comment>
<dbReference type="EMBL" id="X70828">
    <property type="protein sequence ID" value="CAA50168.1"/>
    <property type="status" value="ALT_SEQ"/>
    <property type="molecule type" value="Genomic_DNA"/>
</dbReference>
<dbReference type="RefSeq" id="NP_040900.1">
    <property type="nucleotide sequence ID" value="NC_001458.1"/>
</dbReference>
<dbReference type="SMR" id="Q07853"/>
<dbReference type="KEGG" id="vg:1494572"/>
<dbReference type="OrthoDB" id="41103at10239"/>
<dbReference type="Proteomes" id="UP000007671">
    <property type="component" value="Segment"/>
</dbReference>
<dbReference type="GO" id="GO:0030430">
    <property type="term" value="C:host cell cytoplasm"/>
    <property type="evidence" value="ECO:0007669"/>
    <property type="project" value="UniProtKB-SubCell"/>
</dbReference>
<dbReference type="GO" id="GO:0042025">
    <property type="term" value="C:host cell nucleus"/>
    <property type="evidence" value="ECO:0007669"/>
    <property type="project" value="UniProtKB-SubCell"/>
</dbReference>
<dbReference type="GO" id="GO:0039592">
    <property type="term" value="P:symbiont-mediated arrest of host cell cycle during G2/M transition"/>
    <property type="evidence" value="ECO:0007669"/>
    <property type="project" value="UniProtKB-KW"/>
</dbReference>
<organismHost>
    <name type="scientific">Homo sapiens</name>
    <name type="common">Human</name>
    <dbReference type="NCBI Taxonomy" id="9606"/>
</organismHost>
<gene>
    <name type="primary">E4</name>
</gene>
<organism>
    <name type="scientific">Human papillomavirus type 63</name>
    <dbReference type="NCBI Taxonomy" id="28311"/>
    <lineage>
        <taxon>Viruses</taxon>
        <taxon>Monodnaviria</taxon>
        <taxon>Shotokuvirae</taxon>
        <taxon>Cossaviricota</taxon>
        <taxon>Papovaviricetes</taxon>
        <taxon>Zurhausenvirales</taxon>
        <taxon>Papillomaviridae</taxon>
        <taxon>Firstpapillomavirinae</taxon>
        <taxon>Mupapillomavirus</taxon>
        <taxon>Mupapillomavirus 2</taxon>
    </lineage>
</organism>
<protein>
    <recommendedName>
        <fullName>Protein E4</fullName>
    </recommendedName>
</protein>
<keyword id="KW-0244">Early protein</keyword>
<keyword id="KW-1035">Host cytoplasm</keyword>
<keyword id="KW-1079">Host G2/M cell cycle arrest by virus</keyword>
<keyword id="KW-1048">Host nucleus</keyword>
<keyword id="KW-0945">Host-virus interaction</keyword>
<keyword id="KW-1121">Modulation of host cell cycle by virus</keyword>
<keyword id="KW-0597">Phosphoprotein</keyword>
<keyword id="KW-1185">Reference proteome</keyword>
<accession>Q07853</accession>
<proteinExistence type="inferred from homology"/>
<evidence type="ECO:0000250" key="1">
    <source>
        <dbReference type="UniProtKB" id="P06922"/>
    </source>
</evidence>
<evidence type="ECO:0000256" key="2">
    <source>
        <dbReference type="SAM" id="MobiDB-lite"/>
    </source>
</evidence>
<evidence type="ECO:0000305" key="3"/>
<sequence>MTDRAPHYGLLGLLQTPTQPPKDNPPKLPEKQRRRGRDTTRNRRLFASDGPTDEEGPEVPEIPPSDEEKENRPEPLPVVENGWHSFLRETLEHQLGRLQREVNQDFEDLYRRLGIHP</sequence>
<reference key="1">
    <citation type="journal article" date="1993" name="Virology">
        <title>Two novel types of human papillomavirus, HPV 63 and HPV 65: comparisons of their clinical and histological features and DNA sequences to other HPV types.</title>
        <authorList>
            <person name="Egawa K."/>
            <person name="Delius H."/>
            <person name="Matsukura T."/>
            <person name="Kawashima M."/>
            <person name="de Villiers E.M."/>
        </authorList>
    </citation>
    <scope>NUCLEOTIDE SEQUENCE [GENOMIC DNA]</scope>
</reference>
<feature type="chain" id="PRO_0000133280" description="Protein E4">
    <location>
        <begin position="1"/>
        <end position="117"/>
    </location>
</feature>
<feature type="region of interest" description="Disordered" evidence="2">
    <location>
        <begin position="1"/>
        <end position="78"/>
    </location>
</feature>
<feature type="compositionally biased region" description="Basic and acidic residues" evidence="2">
    <location>
        <begin position="24"/>
        <end position="41"/>
    </location>
</feature>
<feature type="compositionally biased region" description="Acidic residues" evidence="2">
    <location>
        <begin position="51"/>
        <end position="68"/>
    </location>
</feature>